<comment type="function">
    <text evidence="1">Catalyzes the condensation of carbamoyl phosphate and aspartate to form carbamoyl aspartate and inorganic phosphate, the committed step in the de novo pyrimidine nucleotide biosynthesis pathway.</text>
</comment>
<comment type="catalytic activity">
    <reaction evidence="1">
        <text>carbamoyl phosphate + L-aspartate = N-carbamoyl-L-aspartate + phosphate + H(+)</text>
        <dbReference type="Rhea" id="RHEA:20013"/>
        <dbReference type="ChEBI" id="CHEBI:15378"/>
        <dbReference type="ChEBI" id="CHEBI:29991"/>
        <dbReference type="ChEBI" id="CHEBI:32814"/>
        <dbReference type="ChEBI" id="CHEBI:43474"/>
        <dbReference type="ChEBI" id="CHEBI:58228"/>
        <dbReference type="EC" id="2.1.3.2"/>
    </reaction>
</comment>
<comment type="pathway">
    <text evidence="1">Pyrimidine metabolism; UMP biosynthesis via de novo pathway; (S)-dihydroorotate from bicarbonate: step 2/3.</text>
</comment>
<comment type="subunit">
    <text evidence="1">Heterododecamer (2C3:3R2) of six catalytic PyrB chains organized as two trimers (C3), and six regulatory PyrI chains organized as three dimers (R2).</text>
</comment>
<comment type="similarity">
    <text evidence="1">Belongs to the aspartate/ornithine carbamoyltransferase superfamily. ATCase family.</text>
</comment>
<organism>
    <name type="scientific">Acinetobacter baumannii (strain AYE)</name>
    <dbReference type="NCBI Taxonomy" id="509173"/>
    <lineage>
        <taxon>Bacteria</taxon>
        <taxon>Pseudomonadati</taxon>
        <taxon>Pseudomonadota</taxon>
        <taxon>Gammaproteobacteria</taxon>
        <taxon>Moraxellales</taxon>
        <taxon>Moraxellaceae</taxon>
        <taxon>Acinetobacter</taxon>
        <taxon>Acinetobacter calcoaceticus/baumannii complex</taxon>
    </lineage>
</organism>
<keyword id="KW-0665">Pyrimidine biosynthesis</keyword>
<keyword id="KW-0808">Transferase</keyword>
<gene>
    <name evidence="1" type="primary">pyrB</name>
    <name type="ordered locus">ABAYE2578</name>
</gene>
<evidence type="ECO:0000255" key="1">
    <source>
        <dbReference type="HAMAP-Rule" id="MF_00001"/>
    </source>
</evidence>
<proteinExistence type="inferred from homology"/>
<feature type="chain" id="PRO_1000088731" description="Aspartate carbamoyltransferase catalytic subunit">
    <location>
        <begin position="1"/>
        <end position="338"/>
    </location>
</feature>
<feature type="binding site" evidence="1">
    <location>
        <position position="72"/>
    </location>
    <ligand>
        <name>carbamoyl phosphate</name>
        <dbReference type="ChEBI" id="CHEBI:58228"/>
    </ligand>
</feature>
<feature type="binding site" evidence="1">
    <location>
        <position position="73"/>
    </location>
    <ligand>
        <name>carbamoyl phosphate</name>
        <dbReference type="ChEBI" id="CHEBI:58228"/>
    </ligand>
</feature>
<feature type="binding site" evidence="1">
    <location>
        <position position="100"/>
    </location>
    <ligand>
        <name>L-aspartate</name>
        <dbReference type="ChEBI" id="CHEBI:29991"/>
    </ligand>
</feature>
<feature type="binding site" evidence="1">
    <location>
        <position position="122"/>
    </location>
    <ligand>
        <name>carbamoyl phosphate</name>
        <dbReference type="ChEBI" id="CHEBI:58228"/>
    </ligand>
</feature>
<feature type="binding site" evidence="1">
    <location>
        <position position="152"/>
    </location>
    <ligand>
        <name>carbamoyl phosphate</name>
        <dbReference type="ChEBI" id="CHEBI:58228"/>
    </ligand>
</feature>
<feature type="binding site" evidence="1">
    <location>
        <position position="155"/>
    </location>
    <ligand>
        <name>carbamoyl phosphate</name>
        <dbReference type="ChEBI" id="CHEBI:58228"/>
    </ligand>
</feature>
<feature type="binding site" evidence="1">
    <location>
        <position position="186"/>
    </location>
    <ligand>
        <name>L-aspartate</name>
        <dbReference type="ChEBI" id="CHEBI:29991"/>
    </ligand>
</feature>
<feature type="binding site" evidence="1">
    <location>
        <position position="243"/>
    </location>
    <ligand>
        <name>L-aspartate</name>
        <dbReference type="ChEBI" id="CHEBI:29991"/>
    </ligand>
</feature>
<feature type="binding site" evidence="1">
    <location>
        <position position="284"/>
    </location>
    <ligand>
        <name>carbamoyl phosphate</name>
        <dbReference type="ChEBI" id="CHEBI:58228"/>
    </ligand>
</feature>
<feature type="binding site" evidence="1">
    <location>
        <position position="285"/>
    </location>
    <ligand>
        <name>carbamoyl phosphate</name>
        <dbReference type="ChEBI" id="CHEBI:58228"/>
    </ligand>
</feature>
<sequence length="338" mass="37168">MHIAALHQPSQVQLNQDGNLKHFLTIEGLSKENLTKILDTAQSFLDDNNNLINRPLLEGRTVMNLFFENSTRTRTTFEAAAKRLSANVLNIDIARSSTSKGETLRDTLWNLEAMAADIFVVRHSSSGAAHFIAKDVCPKVAIINAGDGRHAHPTQAMLDMLTIRRETKKSFEDLSVAIIGDIKHSRVARSDVAALQTLGCKDIRVIAPNTLLPVGFSEYGDHVRLFNNMDEGITGCDVIIALRIQNERIDSPALSSQSEFYRMYGLNKERLSLAKPDCIVMHPGPMNRGVEIDSSIADGEQSVILKQVTNGIAVRMAVLALSMQGQLQEQGLIEAIAL</sequence>
<dbReference type="EC" id="2.1.3.2" evidence="1"/>
<dbReference type="EMBL" id="CU459141">
    <property type="protein sequence ID" value="CAM87416.1"/>
    <property type="molecule type" value="Genomic_DNA"/>
</dbReference>
<dbReference type="RefSeq" id="WP_000546643.1">
    <property type="nucleotide sequence ID" value="NZ_JBDGFB010000007.1"/>
</dbReference>
<dbReference type="SMR" id="B0VAL3"/>
<dbReference type="EnsemblBacteria" id="CAM87416">
    <property type="protein sequence ID" value="CAM87416"/>
    <property type="gene ID" value="ABAYE2578"/>
</dbReference>
<dbReference type="KEGG" id="aby:ABAYE2578"/>
<dbReference type="HOGENOM" id="CLU_043846_2_0_6"/>
<dbReference type="UniPathway" id="UPA00070">
    <property type="reaction ID" value="UER00116"/>
</dbReference>
<dbReference type="GO" id="GO:0005829">
    <property type="term" value="C:cytosol"/>
    <property type="evidence" value="ECO:0007669"/>
    <property type="project" value="TreeGrafter"/>
</dbReference>
<dbReference type="GO" id="GO:0016597">
    <property type="term" value="F:amino acid binding"/>
    <property type="evidence" value="ECO:0007669"/>
    <property type="project" value="InterPro"/>
</dbReference>
<dbReference type="GO" id="GO:0004070">
    <property type="term" value="F:aspartate carbamoyltransferase activity"/>
    <property type="evidence" value="ECO:0007669"/>
    <property type="project" value="UniProtKB-UniRule"/>
</dbReference>
<dbReference type="GO" id="GO:0006207">
    <property type="term" value="P:'de novo' pyrimidine nucleobase biosynthetic process"/>
    <property type="evidence" value="ECO:0007669"/>
    <property type="project" value="InterPro"/>
</dbReference>
<dbReference type="GO" id="GO:0044205">
    <property type="term" value="P:'de novo' UMP biosynthetic process"/>
    <property type="evidence" value="ECO:0007669"/>
    <property type="project" value="UniProtKB-UniRule"/>
</dbReference>
<dbReference type="GO" id="GO:0006520">
    <property type="term" value="P:amino acid metabolic process"/>
    <property type="evidence" value="ECO:0007669"/>
    <property type="project" value="InterPro"/>
</dbReference>
<dbReference type="FunFam" id="3.40.50.1370:FF:000007">
    <property type="entry name" value="Aspartate carbamoyltransferase"/>
    <property type="match status" value="1"/>
</dbReference>
<dbReference type="Gene3D" id="3.40.50.1370">
    <property type="entry name" value="Aspartate/ornithine carbamoyltransferase"/>
    <property type="match status" value="2"/>
</dbReference>
<dbReference type="HAMAP" id="MF_00001">
    <property type="entry name" value="Asp_carb_tr"/>
    <property type="match status" value="1"/>
</dbReference>
<dbReference type="InterPro" id="IPR006132">
    <property type="entry name" value="Asp/Orn_carbamoyltranf_P-bd"/>
</dbReference>
<dbReference type="InterPro" id="IPR006130">
    <property type="entry name" value="Asp/Orn_carbamoylTrfase"/>
</dbReference>
<dbReference type="InterPro" id="IPR036901">
    <property type="entry name" value="Asp/Orn_carbamoylTrfase_sf"/>
</dbReference>
<dbReference type="InterPro" id="IPR002082">
    <property type="entry name" value="Asp_carbamoyltransf"/>
</dbReference>
<dbReference type="InterPro" id="IPR006131">
    <property type="entry name" value="Asp_carbamoyltransf_Asp/Orn-bd"/>
</dbReference>
<dbReference type="NCBIfam" id="TIGR00670">
    <property type="entry name" value="asp_carb_tr"/>
    <property type="match status" value="1"/>
</dbReference>
<dbReference type="NCBIfam" id="NF002032">
    <property type="entry name" value="PRK00856.1"/>
    <property type="match status" value="1"/>
</dbReference>
<dbReference type="PANTHER" id="PTHR45753:SF6">
    <property type="entry name" value="ASPARTATE CARBAMOYLTRANSFERASE"/>
    <property type="match status" value="1"/>
</dbReference>
<dbReference type="PANTHER" id="PTHR45753">
    <property type="entry name" value="ORNITHINE CARBAMOYLTRANSFERASE, MITOCHONDRIAL"/>
    <property type="match status" value="1"/>
</dbReference>
<dbReference type="Pfam" id="PF00185">
    <property type="entry name" value="OTCace"/>
    <property type="match status" value="1"/>
</dbReference>
<dbReference type="Pfam" id="PF02729">
    <property type="entry name" value="OTCace_N"/>
    <property type="match status" value="1"/>
</dbReference>
<dbReference type="PRINTS" id="PR00100">
    <property type="entry name" value="AOTCASE"/>
</dbReference>
<dbReference type="PRINTS" id="PR00101">
    <property type="entry name" value="ATCASE"/>
</dbReference>
<dbReference type="SUPFAM" id="SSF53671">
    <property type="entry name" value="Aspartate/ornithine carbamoyltransferase"/>
    <property type="match status" value="1"/>
</dbReference>
<dbReference type="PROSITE" id="PS00097">
    <property type="entry name" value="CARBAMOYLTRANSFERASE"/>
    <property type="match status" value="1"/>
</dbReference>
<protein>
    <recommendedName>
        <fullName evidence="1">Aspartate carbamoyltransferase catalytic subunit</fullName>
        <ecNumber evidence="1">2.1.3.2</ecNumber>
    </recommendedName>
    <alternativeName>
        <fullName evidence="1">Aspartate transcarbamylase</fullName>
        <shortName evidence="1">ATCase</shortName>
    </alternativeName>
</protein>
<name>PYRB_ACIBY</name>
<reference key="1">
    <citation type="journal article" date="2008" name="PLoS ONE">
        <title>Comparative analysis of Acinetobacters: three genomes for three lifestyles.</title>
        <authorList>
            <person name="Vallenet D."/>
            <person name="Nordmann P."/>
            <person name="Barbe V."/>
            <person name="Poirel L."/>
            <person name="Mangenot S."/>
            <person name="Bataille E."/>
            <person name="Dossat C."/>
            <person name="Gas S."/>
            <person name="Kreimeyer A."/>
            <person name="Lenoble P."/>
            <person name="Oztas S."/>
            <person name="Poulain J."/>
            <person name="Segurens B."/>
            <person name="Robert C."/>
            <person name="Abergel C."/>
            <person name="Claverie J.-M."/>
            <person name="Raoult D."/>
            <person name="Medigue C."/>
            <person name="Weissenbach J."/>
            <person name="Cruveiller S."/>
        </authorList>
    </citation>
    <scope>NUCLEOTIDE SEQUENCE [LARGE SCALE GENOMIC DNA]</scope>
    <source>
        <strain>AYE</strain>
    </source>
</reference>
<accession>B0VAL3</accession>